<reference key="1">
    <citation type="journal article" date="2009" name="Genome Biol.">
        <title>Genomic and genetic analyses of diversity and plant interactions of Pseudomonas fluorescens.</title>
        <authorList>
            <person name="Silby M.W."/>
            <person name="Cerdeno-Tarraga A.M."/>
            <person name="Vernikos G.S."/>
            <person name="Giddens S.R."/>
            <person name="Jackson R.W."/>
            <person name="Preston G.M."/>
            <person name="Zhang X.-X."/>
            <person name="Moon C.D."/>
            <person name="Gehrig S.M."/>
            <person name="Godfrey S.A.C."/>
            <person name="Knight C.G."/>
            <person name="Malone J.G."/>
            <person name="Robinson Z."/>
            <person name="Spiers A.J."/>
            <person name="Harris S."/>
            <person name="Challis G.L."/>
            <person name="Yaxley A.M."/>
            <person name="Harris D."/>
            <person name="Seeger K."/>
            <person name="Murphy L."/>
            <person name="Rutter S."/>
            <person name="Squares R."/>
            <person name="Quail M.A."/>
            <person name="Saunders E."/>
            <person name="Mavromatis K."/>
            <person name="Brettin T.S."/>
            <person name="Bentley S.D."/>
            <person name="Hothersall J."/>
            <person name="Stephens E."/>
            <person name="Thomas C.M."/>
            <person name="Parkhill J."/>
            <person name="Levy S.B."/>
            <person name="Rainey P.B."/>
            <person name="Thomson N.R."/>
        </authorList>
    </citation>
    <scope>NUCLEOTIDE SEQUENCE [LARGE SCALE GENOMIC DNA]</scope>
    <source>
        <strain>SBW25</strain>
    </source>
</reference>
<organism>
    <name type="scientific">Pseudomonas fluorescens (strain SBW25)</name>
    <dbReference type="NCBI Taxonomy" id="216595"/>
    <lineage>
        <taxon>Bacteria</taxon>
        <taxon>Pseudomonadati</taxon>
        <taxon>Pseudomonadota</taxon>
        <taxon>Gammaproteobacteria</taxon>
        <taxon>Pseudomonadales</taxon>
        <taxon>Pseudomonadaceae</taxon>
        <taxon>Pseudomonas</taxon>
    </lineage>
</organism>
<name>ASTE_PSEFS</name>
<evidence type="ECO:0000255" key="1">
    <source>
        <dbReference type="HAMAP-Rule" id="MF_00767"/>
    </source>
</evidence>
<accession>C3JXY4</accession>
<feature type="chain" id="PRO_1000212895" description="Succinylglutamate desuccinylase">
    <location>
        <begin position="1"/>
        <end position="334"/>
    </location>
</feature>
<feature type="active site" evidence="1">
    <location>
        <position position="215"/>
    </location>
</feature>
<feature type="binding site" evidence="1">
    <location>
        <position position="59"/>
    </location>
    <ligand>
        <name>Zn(2+)</name>
        <dbReference type="ChEBI" id="CHEBI:29105"/>
    </ligand>
</feature>
<feature type="binding site" evidence="1">
    <location>
        <position position="62"/>
    </location>
    <ligand>
        <name>Zn(2+)</name>
        <dbReference type="ChEBI" id="CHEBI:29105"/>
    </ligand>
</feature>
<feature type="binding site" evidence="1">
    <location>
        <position position="151"/>
    </location>
    <ligand>
        <name>Zn(2+)</name>
        <dbReference type="ChEBI" id="CHEBI:29105"/>
    </ligand>
</feature>
<keyword id="KW-0056">Arginine metabolism</keyword>
<keyword id="KW-0378">Hydrolase</keyword>
<keyword id="KW-0479">Metal-binding</keyword>
<keyword id="KW-0862">Zinc</keyword>
<proteinExistence type="inferred from homology"/>
<sequence>MLALGKLLELTLAGREPAQKIQLTVDGVQMRWLSEGALEVRPPEARDNGSDLLLSSGIHGNETAPIELLDRLLHGIARGEIKPRSRVLFLFGNTEAMRRGERYLELDVNRLFNGRHEKNIGPEAMRAAELEQLARSFFSLPGRSRLHYDLHTAIRGSKIEQFALYPWKEGRQHSRHQLARLNAAGMQAVLLQNKTSITFTAFTYEQLEAEAFTLELGKARPFGQNQGVNVSRLELRLKQIIEGTEPETDSLDGLKLFAVSREVIKHSDAFLLHLPADVENFSELEKGYLLAEDVAKTRWVIEEEGARIIFPNPKVKNGLRAGILIVPTTDAVLG</sequence>
<comment type="function">
    <text evidence="1">Transforms N(2)-succinylglutamate into succinate and glutamate.</text>
</comment>
<comment type="catalytic activity">
    <reaction evidence="1">
        <text>N-succinyl-L-glutamate + H2O = L-glutamate + succinate</text>
        <dbReference type="Rhea" id="RHEA:15169"/>
        <dbReference type="ChEBI" id="CHEBI:15377"/>
        <dbReference type="ChEBI" id="CHEBI:29985"/>
        <dbReference type="ChEBI" id="CHEBI:30031"/>
        <dbReference type="ChEBI" id="CHEBI:58763"/>
        <dbReference type="EC" id="3.5.1.96"/>
    </reaction>
</comment>
<comment type="cofactor">
    <cofactor evidence="1">
        <name>Zn(2+)</name>
        <dbReference type="ChEBI" id="CHEBI:29105"/>
    </cofactor>
    <text evidence="1">Binds 1 zinc ion per subunit.</text>
</comment>
<comment type="pathway">
    <text evidence="1">Amino-acid degradation; L-arginine degradation via AST pathway; L-glutamate and succinate from L-arginine: step 5/5.</text>
</comment>
<comment type="similarity">
    <text evidence="1">Belongs to the AspA/AstE family. Succinylglutamate desuccinylase subfamily.</text>
</comment>
<protein>
    <recommendedName>
        <fullName evidence="1">Succinylglutamate desuccinylase</fullName>
        <ecNumber evidence="1">3.5.1.96</ecNumber>
    </recommendedName>
</protein>
<gene>
    <name evidence="1" type="primary">astE</name>
    <name type="ordered locus">PFLU_4751</name>
</gene>
<dbReference type="EC" id="3.5.1.96" evidence="1"/>
<dbReference type="EMBL" id="AM181176">
    <property type="protein sequence ID" value="CAY51574.1"/>
    <property type="molecule type" value="Genomic_DNA"/>
</dbReference>
<dbReference type="RefSeq" id="WP_015885471.1">
    <property type="nucleotide sequence ID" value="NC_012660.1"/>
</dbReference>
<dbReference type="SMR" id="C3JXY4"/>
<dbReference type="STRING" id="294.SRM1_04226"/>
<dbReference type="GeneID" id="93466363"/>
<dbReference type="PATRIC" id="fig|216595.4.peg.4885"/>
<dbReference type="eggNOG" id="COG2988">
    <property type="taxonomic scope" value="Bacteria"/>
</dbReference>
<dbReference type="HOGENOM" id="CLU_071608_0_0_6"/>
<dbReference type="OrthoDB" id="5290473at2"/>
<dbReference type="UniPathway" id="UPA00185">
    <property type="reaction ID" value="UER00283"/>
</dbReference>
<dbReference type="GO" id="GO:0016788">
    <property type="term" value="F:hydrolase activity, acting on ester bonds"/>
    <property type="evidence" value="ECO:0007669"/>
    <property type="project" value="UniProtKB-UniRule"/>
</dbReference>
<dbReference type="GO" id="GO:0009017">
    <property type="term" value="F:succinylglutamate desuccinylase activity"/>
    <property type="evidence" value="ECO:0007669"/>
    <property type="project" value="UniProtKB-EC"/>
</dbReference>
<dbReference type="GO" id="GO:0008270">
    <property type="term" value="F:zinc ion binding"/>
    <property type="evidence" value="ECO:0007669"/>
    <property type="project" value="UniProtKB-UniRule"/>
</dbReference>
<dbReference type="GO" id="GO:0019544">
    <property type="term" value="P:arginine catabolic process to glutamate"/>
    <property type="evidence" value="ECO:0007669"/>
    <property type="project" value="UniProtKB-UniRule"/>
</dbReference>
<dbReference type="GO" id="GO:0019545">
    <property type="term" value="P:arginine catabolic process to succinate"/>
    <property type="evidence" value="ECO:0007669"/>
    <property type="project" value="UniProtKB-UniRule"/>
</dbReference>
<dbReference type="CDD" id="cd03855">
    <property type="entry name" value="M14_ASTE"/>
    <property type="match status" value="1"/>
</dbReference>
<dbReference type="Gene3D" id="3.40.630.10">
    <property type="entry name" value="Zn peptidases"/>
    <property type="match status" value="1"/>
</dbReference>
<dbReference type="HAMAP" id="MF_00767">
    <property type="entry name" value="Arg_catab_AstE"/>
    <property type="match status" value="1"/>
</dbReference>
<dbReference type="InterPro" id="IPR050178">
    <property type="entry name" value="AspA/AstE_fam"/>
</dbReference>
<dbReference type="InterPro" id="IPR055438">
    <property type="entry name" value="AstE_AspA_cat"/>
</dbReference>
<dbReference type="InterPro" id="IPR007036">
    <property type="entry name" value="Aste_AspA_hybrid_dom"/>
</dbReference>
<dbReference type="InterPro" id="IPR016681">
    <property type="entry name" value="SuccinylGlu_desuccinylase"/>
</dbReference>
<dbReference type="NCBIfam" id="TIGR03242">
    <property type="entry name" value="arg_catab_astE"/>
    <property type="match status" value="1"/>
</dbReference>
<dbReference type="NCBIfam" id="NF003706">
    <property type="entry name" value="PRK05324.1"/>
    <property type="match status" value="1"/>
</dbReference>
<dbReference type="PANTHER" id="PTHR15162">
    <property type="entry name" value="ASPARTOACYLASE"/>
    <property type="match status" value="1"/>
</dbReference>
<dbReference type="PANTHER" id="PTHR15162:SF7">
    <property type="entry name" value="SUCCINYLGLUTAMATE DESUCCINYLASE"/>
    <property type="match status" value="1"/>
</dbReference>
<dbReference type="Pfam" id="PF24827">
    <property type="entry name" value="AstE_AspA_cat"/>
    <property type="match status" value="1"/>
</dbReference>
<dbReference type="Pfam" id="PF04952">
    <property type="entry name" value="AstE_AspA_hybrid"/>
    <property type="match status" value="1"/>
</dbReference>
<dbReference type="PIRSF" id="PIRSF017020">
    <property type="entry name" value="AstE"/>
    <property type="match status" value="1"/>
</dbReference>
<dbReference type="SUPFAM" id="SSF53187">
    <property type="entry name" value="Zn-dependent exopeptidases"/>
    <property type="match status" value="1"/>
</dbReference>